<keyword id="KW-0963">Cytoplasm</keyword>
<keyword id="KW-0251">Elongation factor</keyword>
<keyword id="KW-0342">GTP-binding</keyword>
<keyword id="KW-0378">Hydrolase</keyword>
<keyword id="KW-0460">Magnesium</keyword>
<keyword id="KW-0479">Metal-binding</keyword>
<keyword id="KW-0547">Nucleotide-binding</keyword>
<keyword id="KW-0648">Protein biosynthesis</keyword>
<reference key="1">
    <citation type="journal article" date="2006" name="PLoS Genet.">
        <title>Who ate whom? Adaptive Helicobacter genomic changes that accompanied a host jump from early humans to large felines.</title>
        <authorList>
            <person name="Eppinger M."/>
            <person name="Baar C."/>
            <person name="Linz B."/>
            <person name="Raddatz G."/>
            <person name="Lanz C."/>
            <person name="Keller H."/>
            <person name="Morelli G."/>
            <person name="Gressmann H."/>
            <person name="Achtman M."/>
            <person name="Schuster S.C."/>
        </authorList>
    </citation>
    <scope>NUCLEOTIDE SEQUENCE [LARGE SCALE GENOMIC DNA]</scope>
    <source>
        <strain>Sheeba</strain>
    </source>
</reference>
<proteinExistence type="inferred from homology"/>
<accession>Q17VM8</accession>
<dbReference type="EC" id="3.6.5.3" evidence="2"/>
<dbReference type="EMBL" id="AM260522">
    <property type="protein sequence ID" value="CAK00298.1"/>
    <property type="molecule type" value="Genomic_DNA"/>
</dbReference>
<dbReference type="RefSeq" id="WP_011578381.1">
    <property type="nucleotide sequence ID" value="NC_008229.1"/>
</dbReference>
<dbReference type="SMR" id="Q17VM8"/>
<dbReference type="STRING" id="382638.Hac_1586"/>
<dbReference type="GeneID" id="31758839"/>
<dbReference type="KEGG" id="hac:Hac_1586"/>
<dbReference type="eggNOG" id="COG0050">
    <property type="taxonomic scope" value="Bacteria"/>
</dbReference>
<dbReference type="HOGENOM" id="CLU_007265_0_1_7"/>
<dbReference type="OrthoDB" id="9803139at2"/>
<dbReference type="BioCyc" id="HACI382638:HAC_RS06690-MONOMER"/>
<dbReference type="Proteomes" id="UP000000775">
    <property type="component" value="Chromosome"/>
</dbReference>
<dbReference type="GO" id="GO:0005829">
    <property type="term" value="C:cytosol"/>
    <property type="evidence" value="ECO:0007669"/>
    <property type="project" value="TreeGrafter"/>
</dbReference>
<dbReference type="GO" id="GO:0005525">
    <property type="term" value="F:GTP binding"/>
    <property type="evidence" value="ECO:0007669"/>
    <property type="project" value="UniProtKB-UniRule"/>
</dbReference>
<dbReference type="GO" id="GO:0003924">
    <property type="term" value="F:GTPase activity"/>
    <property type="evidence" value="ECO:0007669"/>
    <property type="project" value="InterPro"/>
</dbReference>
<dbReference type="GO" id="GO:0003746">
    <property type="term" value="F:translation elongation factor activity"/>
    <property type="evidence" value="ECO:0007669"/>
    <property type="project" value="UniProtKB-UniRule"/>
</dbReference>
<dbReference type="CDD" id="cd01884">
    <property type="entry name" value="EF_Tu"/>
    <property type="match status" value="1"/>
</dbReference>
<dbReference type="CDD" id="cd03697">
    <property type="entry name" value="EFTU_II"/>
    <property type="match status" value="1"/>
</dbReference>
<dbReference type="CDD" id="cd03707">
    <property type="entry name" value="EFTU_III"/>
    <property type="match status" value="1"/>
</dbReference>
<dbReference type="FunFam" id="2.40.30.10:FF:000001">
    <property type="entry name" value="Elongation factor Tu"/>
    <property type="match status" value="1"/>
</dbReference>
<dbReference type="FunFam" id="3.40.50.300:FF:000003">
    <property type="entry name" value="Elongation factor Tu"/>
    <property type="match status" value="1"/>
</dbReference>
<dbReference type="Gene3D" id="3.40.50.300">
    <property type="entry name" value="P-loop containing nucleotide triphosphate hydrolases"/>
    <property type="match status" value="1"/>
</dbReference>
<dbReference type="Gene3D" id="2.40.30.10">
    <property type="entry name" value="Translation factors"/>
    <property type="match status" value="2"/>
</dbReference>
<dbReference type="HAMAP" id="MF_00118_B">
    <property type="entry name" value="EF_Tu_B"/>
    <property type="match status" value="1"/>
</dbReference>
<dbReference type="InterPro" id="IPR041709">
    <property type="entry name" value="EF-Tu_GTP-bd"/>
</dbReference>
<dbReference type="InterPro" id="IPR050055">
    <property type="entry name" value="EF-Tu_GTPase"/>
</dbReference>
<dbReference type="InterPro" id="IPR004161">
    <property type="entry name" value="EFTu-like_2"/>
</dbReference>
<dbReference type="InterPro" id="IPR033720">
    <property type="entry name" value="EFTU_2"/>
</dbReference>
<dbReference type="InterPro" id="IPR031157">
    <property type="entry name" value="G_TR_CS"/>
</dbReference>
<dbReference type="InterPro" id="IPR027417">
    <property type="entry name" value="P-loop_NTPase"/>
</dbReference>
<dbReference type="InterPro" id="IPR005225">
    <property type="entry name" value="Small_GTP-bd"/>
</dbReference>
<dbReference type="InterPro" id="IPR000795">
    <property type="entry name" value="T_Tr_GTP-bd_dom"/>
</dbReference>
<dbReference type="InterPro" id="IPR009000">
    <property type="entry name" value="Transl_B-barrel_sf"/>
</dbReference>
<dbReference type="InterPro" id="IPR009001">
    <property type="entry name" value="Transl_elong_EF1A/Init_IF2_C"/>
</dbReference>
<dbReference type="InterPro" id="IPR004541">
    <property type="entry name" value="Transl_elong_EFTu/EF1A_bac/org"/>
</dbReference>
<dbReference type="InterPro" id="IPR004160">
    <property type="entry name" value="Transl_elong_EFTu/EF1A_C"/>
</dbReference>
<dbReference type="NCBIfam" id="TIGR00485">
    <property type="entry name" value="EF-Tu"/>
    <property type="match status" value="1"/>
</dbReference>
<dbReference type="NCBIfam" id="NF000766">
    <property type="entry name" value="PRK00049.1"/>
    <property type="match status" value="1"/>
</dbReference>
<dbReference type="NCBIfam" id="NF009372">
    <property type="entry name" value="PRK12735.1"/>
    <property type="match status" value="1"/>
</dbReference>
<dbReference type="NCBIfam" id="NF009373">
    <property type="entry name" value="PRK12736.1"/>
    <property type="match status" value="1"/>
</dbReference>
<dbReference type="NCBIfam" id="TIGR00231">
    <property type="entry name" value="small_GTP"/>
    <property type="match status" value="1"/>
</dbReference>
<dbReference type="PANTHER" id="PTHR43721:SF22">
    <property type="entry name" value="ELONGATION FACTOR TU, MITOCHONDRIAL"/>
    <property type="match status" value="1"/>
</dbReference>
<dbReference type="PANTHER" id="PTHR43721">
    <property type="entry name" value="ELONGATION FACTOR TU-RELATED"/>
    <property type="match status" value="1"/>
</dbReference>
<dbReference type="Pfam" id="PF00009">
    <property type="entry name" value="GTP_EFTU"/>
    <property type="match status" value="1"/>
</dbReference>
<dbReference type="Pfam" id="PF03144">
    <property type="entry name" value="GTP_EFTU_D2"/>
    <property type="match status" value="1"/>
</dbReference>
<dbReference type="Pfam" id="PF03143">
    <property type="entry name" value="GTP_EFTU_D3"/>
    <property type="match status" value="1"/>
</dbReference>
<dbReference type="PRINTS" id="PR00315">
    <property type="entry name" value="ELONGATNFCT"/>
</dbReference>
<dbReference type="SUPFAM" id="SSF50465">
    <property type="entry name" value="EF-Tu/eEF-1alpha/eIF2-gamma C-terminal domain"/>
    <property type="match status" value="1"/>
</dbReference>
<dbReference type="SUPFAM" id="SSF52540">
    <property type="entry name" value="P-loop containing nucleoside triphosphate hydrolases"/>
    <property type="match status" value="1"/>
</dbReference>
<dbReference type="SUPFAM" id="SSF50447">
    <property type="entry name" value="Translation proteins"/>
    <property type="match status" value="1"/>
</dbReference>
<dbReference type="PROSITE" id="PS00301">
    <property type="entry name" value="G_TR_1"/>
    <property type="match status" value="1"/>
</dbReference>
<dbReference type="PROSITE" id="PS51722">
    <property type="entry name" value="G_TR_2"/>
    <property type="match status" value="1"/>
</dbReference>
<comment type="function">
    <text evidence="2">GTP hydrolase that promotes the GTP-dependent binding of aminoacyl-tRNA to the A-site of ribosomes during protein biosynthesis.</text>
</comment>
<comment type="catalytic activity">
    <reaction evidence="2">
        <text>GTP + H2O = GDP + phosphate + H(+)</text>
        <dbReference type="Rhea" id="RHEA:19669"/>
        <dbReference type="ChEBI" id="CHEBI:15377"/>
        <dbReference type="ChEBI" id="CHEBI:15378"/>
        <dbReference type="ChEBI" id="CHEBI:37565"/>
        <dbReference type="ChEBI" id="CHEBI:43474"/>
        <dbReference type="ChEBI" id="CHEBI:58189"/>
        <dbReference type="EC" id="3.6.5.3"/>
    </reaction>
    <physiologicalReaction direction="left-to-right" evidence="2">
        <dbReference type="Rhea" id="RHEA:19670"/>
    </physiologicalReaction>
</comment>
<comment type="subunit">
    <text evidence="2">Monomer.</text>
</comment>
<comment type="subcellular location">
    <subcellularLocation>
        <location evidence="2">Cytoplasm</location>
    </subcellularLocation>
</comment>
<comment type="similarity">
    <text evidence="2">Belongs to the TRAFAC class translation factor GTPase superfamily. Classic translation factor GTPase family. EF-Tu/EF-1A subfamily.</text>
</comment>
<evidence type="ECO:0000250" key="1"/>
<evidence type="ECO:0000255" key="2">
    <source>
        <dbReference type="HAMAP-Rule" id="MF_00118"/>
    </source>
</evidence>
<sequence length="399" mass="43540">MAKEKFNRTKPHVNIGTIGHVDHGKTTLSAAISAVLSLKGLAEMKDYDNIDNAPEEKERGITIATSHIEYETENRHYAHVDCPGHADYVKNMITGAAQMDGAILVVSAADGPMPQTREHILLSRQVGVPHIVVFLNKQDMVDDQELLELVEVEVRELLSAYEFPGDDTPIVAGSALKALEEAKAGSVGEWGEKVLKLMAEVDAYIPTPVRDTEKSFLMPVEDVFSIAGRGTVVTGRIERGMVKVGDEVEIVGIRATQKTTVTGVEMFRKELDKGEAGDNVGVLLRGTKKEEVERGMVLCKPGSITPHKKFEGEIYVLSKEEGGRHTPFFTNYRPQFYVRTTDVTGSITLPEGVEMVMPGDNVKITVELINSIALELGTKFAIREGGRTVGAGVVSNIIE</sequence>
<name>EFTU_HELAH</name>
<protein>
    <recommendedName>
        <fullName evidence="2">Elongation factor Tu</fullName>
        <shortName evidence="2">EF-Tu</shortName>
        <ecNumber evidence="2">3.6.5.3</ecNumber>
    </recommendedName>
</protein>
<feature type="chain" id="PRO_1000015672" description="Elongation factor Tu">
    <location>
        <begin position="1"/>
        <end position="399"/>
    </location>
</feature>
<feature type="domain" description="tr-type G">
    <location>
        <begin position="10"/>
        <end position="209"/>
    </location>
</feature>
<feature type="region of interest" description="G1" evidence="1">
    <location>
        <begin position="19"/>
        <end position="26"/>
    </location>
</feature>
<feature type="region of interest" description="G2" evidence="1">
    <location>
        <begin position="60"/>
        <end position="64"/>
    </location>
</feature>
<feature type="region of interest" description="G3" evidence="1">
    <location>
        <begin position="81"/>
        <end position="84"/>
    </location>
</feature>
<feature type="region of interest" description="G4" evidence="1">
    <location>
        <begin position="136"/>
        <end position="139"/>
    </location>
</feature>
<feature type="region of interest" description="G5" evidence="1">
    <location>
        <begin position="174"/>
        <end position="176"/>
    </location>
</feature>
<feature type="binding site" evidence="2">
    <location>
        <begin position="19"/>
        <end position="26"/>
    </location>
    <ligand>
        <name>GTP</name>
        <dbReference type="ChEBI" id="CHEBI:37565"/>
    </ligand>
</feature>
<feature type="binding site" evidence="2">
    <location>
        <position position="26"/>
    </location>
    <ligand>
        <name>Mg(2+)</name>
        <dbReference type="ChEBI" id="CHEBI:18420"/>
    </ligand>
</feature>
<feature type="binding site" evidence="2">
    <location>
        <begin position="81"/>
        <end position="85"/>
    </location>
    <ligand>
        <name>GTP</name>
        <dbReference type="ChEBI" id="CHEBI:37565"/>
    </ligand>
</feature>
<feature type="binding site" evidence="2">
    <location>
        <begin position="136"/>
        <end position="139"/>
    </location>
    <ligand>
        <name>GTP</name>
        <dbReference type="ChEBI" id="CHEBI:37565"/>
    </ligand>
</feature>
<gene>
    <name evidence="2" type="primary">tuf</name>
    <name type="ordered locus">Hac_1586</name>
</gene>
<organism>
    <name type="scientific">Helicobacter acinonychis (strain Sheeba)</name>
    <dbReference type="NCBI Taxonomy" id="382638"/>
    <lineage>
        <taxon>Bacteria</taxon>
        <taxon>Pseudomonadati</taxon>
        <taxon>Campylobacterota</taxon>
        <taxon>Epsilonproteobacteria</taxon>
        <taxon>Campylobacterales</taxon>
        <taxon>Helicobacteraceae</taxon>
        <taxon>Helicobacter</taxon>
    </lineage>
</organism>